<proteinExistence type="inferred from homology"/>
<name>METE_VIBVU</name>
<evidence type="ECO:0000255" key="1">
    <source>
        <dbReference type="HAMAP-Rule" id="MF_00172"/>
    </source>
</evidence>
<feature type="chain" id="PRO_0000098678" description="5-methyltetrahydropteroyltriglutamate--homocysteine methyltransferase">
    <location>
        <begin position="1"/>
        <end position="778"/>
    </location>
</feature>
<feature type="active site" description="Proton donor" evidence="1">
    <location>
        <position position="699"/>
    </location>
</feature>
<feature type="binding site" evidence="1">
    <location>
        <begin position="17"/>
        <end position="20"/>
    </location>
    <ligand>
        <name>5-methyltetrahydropteroyltri-L-glutamate</name>
        <dbReference type="ChEBI" id="CHEBI:58207"/>
    </ligand>
</feature>
<feature type="binding site" evidence="1">
    <location>
        <position position="118"/>
    </location>
    <ligand>
        <name>5-methyltetrahydropteroyltri-L-glutamate</name>
        <dbReference type="ChEBI" id="CHEBI:58207"/>
    </ligand>
</feature>
<feature type="binding site" evidence="1">
    <location>
        <begin position="436"/>
        <end position="438"/>
    </location>
    <ligand>
        <name>L-homocysteine</name>
        <dbReference type="ChEBI" id="CHEBI:58199"/>
    </ligand>
</feature>
<feature type="binding site" evidence="1">
    <location>
        <begin position="436"/>
        <end position="438"/>
    </location>
    <ligand>
        <name>L-methionine</name>
        <dbReference type="ChEBI" id="CHEBI:57844"/>
    </ligand>
</feature>
<feature type="binding site" evidence="1">
    <location>
        <position position="489"/>
    </location>
    <ligand>
        <name>L-homocysteine</name>
        <dbReference type="ChEBI" id="CHEBI:58199"/>
    </ligand>
</feature>
<feature type="binding site" evidence="1">
    <location>
        <position position="489"/>
    </location>
    <ligand>
        <name>L-methionine</name>
        <dbReference type="ChEBI" id="CHEBI:57844"/>
    </ligand>
</feature>
<feature type="binding site" evidence="1">
    <location>
        <begin position="520"/>
        <end position="521"/>
    </location>
    <ligand>
        <name>5-methyltetrahydropteroyltri-L-glutamate</name>
        <dbReference type="ChEBI" id="CHEBI:58207"/>
    </ligand>
</feature>
<feature type="binding site" evidence="1">
    <location>
        <position position="566"/>
    </location>
    <ligand>
        <name>5-methyltetrahydropteroyltri-L-glutamate</name>
        <dbReference type="ChEBI" id="CHEBI:58207"/>
    </ligand>
</feature>
<feature type="binding site" evidence="1">
    <location>
        <position position="604"/>
    </location>
    <ligand>
        <name>L-homocysteine</name>
        <dbReference type="ChEBI" id="CHEBI:58199"/>
    </ligand>
</feature>
<feature type="binding site" evidence="1">
    <location>
        <position position="604"/>
    </location>
    <ligand>
        <name>L-methionine</name>
        <dbReference type="ChEBI" id="CHEBI:57844"/>
    </ligand>
</feature>
<feature type="binding site" evidence="1">
    <location>
        <position position="610"/>
    </location>
    <ligand>
        <name>5-methyltetrahydropteroyltri-L-glutamate</name>
        <dbReference type="ChEBI" id="CHEBI:58207"/>
    </ligand>
</feature>
<feature type="binding site" evidence="1">
    <location>
        <position position="646"/>
    </location>
    <ligand>
        <name>Zn(2+)</name>
        <dbReference type="ChEBI" id="CHEBI:29105"/>
        <note>catalytic</note>
    </ligand>
</feature>
<feature type="binding site" evidence="1">
    <location>
        <position position="648"/>
    </location>
    <ligand>
        <name>Zn(2+)</name>
        <dbReference type="ChEBI" id="CHEBI:29105"/>
        <note>catalytic</note>
    </ligand>
</feature>
<feature type="binding site" evidence="1">
    <location>
        <position position="670"/>
    </location>
    <ligand>
        <name>Zn(2+)</name>
        <dbReference type="ChEBI" id="CHEBI:29105"/>
        <note>catalytic</note>
    </ligand>
</feature>
<feature type="binding site" evidence="1">
    <location>
        <position position="731"/>
    </location>
    <ligand>
        <name>Zn(2+)</name>
        <dbReference type="ChEBI" id="CHEBI:29105"/>
        <note>catalytic</note>
    </ligand>
</feature>
<keyword id="KW-0028">Amino-acid biosynthesis</keyword>
<keyword id="KW-0479">Metal-binding</keyword>
<keyword id="KW-0486">Methionine biosynthesis</keyword>
<keyword id="KW-0489">Methyltransferase</keyword>
<keyword id="KW-0677">Repeat</keyword>
<keyword id="KW-0808">Transferase</keyword>
<keyword id="KW-0862">Zinc</keyword>
<reference key="1">
    <citation type="submission" date="2002-12" db="EMBL/GenBank/DDBJ databases">
        <title>Complete genome sequence of Vibrio vulnificus CMCP6.</title>
        <authorList>
            <person name="Rhee J.H."/>
            <person name="Kim S.Y."/>
            <person name="Chung S.S."/>
            <person name="Kim J.J."/>
            <person name="Moon Y.H."/>
            <person name="Jeong H."/>
            <person name="Choy H.E."/>
        </authorList>
    </citation>
    <scope>NUCLEOTIDE SEQUENCE [LARGE SCALE GENOMIC DNA]</scope>
    <source>
        <strain>CMCP6</strain>
    </source>
</reference>
<gene>
    <name evidence="1" type="primary">metE</name>
    <name type="ordered locus">VV1_2219</name>
</gene>
<organism>
    <name type="scientific">Vibrio vulnificus (strain CMCP6)</name>
    <dbReference type="NCBI Taxonomy" id="216895"/>
    <lineage>
        <taxon>Bacteria</taxon>
        <taxon>Pseudomonadati</taxon>
        <taxon>Pseudomonadota</taxon>
        <taxon>Gammaproteobacteria</taxon>
        <taxon>Vibrionales</taxon>
        <taxon>Vibrionaceae</taxon>
        <taxon>Vibrio</taxon>
    </lineage>
</organism>
<comment type="function">
    <text evidence="1">Catalyzes the transfer of a methyl group from 5-methyltetrahydrofolate to homocysteine resulting in methionine formation.</text>
</comment>
<comment type="catalytic activity">
    <reaction evidence="1">
        <text>5-methyltetrahydropteroyltri-L-glutamate + L-homocysteine = tetrahydropteroyltri-L-glutamate + L-methionine</text>
        <dbReference type="Rhea" id="RHEA:21196"/>
        <dbReference type="ChEBI" id="CHEBI:57844"/>
        <dbReference type="ChEBI" id="CHEBI:58140"/>
        <dbReference type="ChEBI" id="CHEBI:58199"/>
        <dbReference type="ChEBI" id="CHEBI:58207"/>
        <dbReference type="EC" id="2.1.1.14"/>
    </reaction>
</comment>
<comment type="cofactor">
    <cofactor evidence="1">
        <name>Zn(2+)</name>
        <dbReference type="ChEBI" id="CHEBI:29105"/>
    </cofactor>
    <text evidence="1">Binds 1 zinc ion per subunit.</text>
</comment>
<comment type="pathway">
    <text evidence="1">Amino-acid biosynthesis; L-methionine biosynthesis via de novo pathway; L-methionine from L-homocysteine (MetE route): step 1/1.</text>
</comment>
<comment type="similarity">
    <text evidence="1">Belongs to the vitamin-B12 independent methionine synthase family.</text>
</comment>
<protein>
    <recommendedName>
        <fullName evidence="1">5-methyltetrahydropteroyltriglutamate--homocysteine methyltransferase</fullName>
        <ecNumber evidence="1">2.1.1.14</ecNumber>
    </recommendedName>
    <alternativeName>
        <fullName evidence="1">Cobalamin-independent methionine synthase</fullName>
    </alternativeName>
    <alternativeName>
        <fullName evidence="1">Methionine synthase, vitamin-B12 independent isozyme</fullName>
    </alternativeName>
</protein>
<dbReference type="EC" id="2.1.1.14" evidence="1"/>
<dbReference type="EMBL" id="AE016795">
    <property type="protein sequence ID" value="AAO10600.1"/>
    <property type="molecule type" value="Genomic_DNA"/>
</dbReference>
<dbReference type="RefSeq" id="WP_011080092.1">
    <property type="nucleotide sequence ID" value="NC_004459.3"/>
</dbReference>
<dbReference type="SMR" id="Q8CWK1"/>
<dbReference type="KEGG" id="vvu:VV1_2219"/>
<dbReference type="HOGENOM" id="CLU_013175_0_0_6"/>
<dbReference type="UniPathway" id="UPA00051">
    <property type="reaction ID" value="UER00082"/>
</dbReference>
<dbReference type="Proteomes" id="UP000002275">
    <property type="component" value="Chromosome 1"/>
</dbReference>
<dbReference type="GO" id="GO:0003871">
    <property type="term" value="F:5-methyltetrahydropteroyltriglutamate-homocysteine S-methyltransferase activity"/>
    <property type="evidence" value="ECO:0007669"/>
    <property type="project" value="UniProtKB-UniRule"/>
</dbReference>
<dbReference type="GO" id="GO:0008270">
    <property type="term" value="F:zinc ion binding"/>
    <property type="evidence" value="ECO:0007669"/>
    <property type="project" value="InterPro"/>
</dbReference>
<dbReference type="GO" id="GO:0009086">
    <property type="term" value="P:methionine biosynthetic process"/>
    <property type="evidence" value="ECO:0007669"/>
    <property type="project" value="UniProtKB-UniRule"/>
</dbReference>
<dbReference type="GO" id="GO:0032259">
    <property type="term" value="P:methylation"/>
    <property type="evidence" value="ECO:0007669"/>
    <property type="project" value="UniProtKB-KW"/>
</dbReference>
<dbReference type="CDD" id="cd03311">
    <property type="entry name" value="CIMS_C_terminal_like"/>
    <property type="match status" value="1"/>
</dbReference>
<dbReference type="CDD" id="cd03312">
    <property type="entry name" value="CIMS_N_terminal_like"/>
    <property type="match status" value="1"/>
</dbReference>
<dbReference type="FunFam" id="3.20.20.210:FF:000002">
    <property type="entry name" value="5-methyltetrahydropteroyltriglutamate--homocysteine methyltransferase"/>
    <property type="match status" value="1"/>
</dbReference>
<dbReference type="Gene3D" id="3.20.20.210">
    <property type="match status" value="2"/>
</dbReference>
<dbReference type="HAMAP" id="MF_00172">
    <property type="entry name" value="Meth_synth"/>
    <property type="match status" value="1"/>
</dbReference>
<dbReference type="InterPro" id="IPR013215">
    <property type="entry name" value="Cbl-indep_Met_Synth_N"/>
</dbReference>
<dbReference type="InterPro" id="IPR006276">
    <property type="entry name" value="Cobalamin-indep_Met_synthase"/>
</dbReference>
<dbReference type="InterPro" id="IPR002629">
    <property type="entry name" value="Met_Synth_C/arc"/>
</dbReference>
<dbReference type="InterPro" id="IPR038071">
    <property type="entry name" value="UROD/MetE-like_sf"/>
</dbReference>
<dbReference type="NCBIfam" id="TIGR01371">
    <property type="entry name" value="met_syn_B12ind"/>
    <property type="match status" value="1"/>
</dbReference>
<dbReference type="NCBIfam" id="NF003556">
    <property type="entry name" value="PRK05222.1"/>
    <property type="match status" value="1"/>
</dbReference>
<dbReference type="PANTHER" id="PTHR30519">
    <property type="entry name" value="5-METHYLTETRAHYDROPTEROYLTRIGLUTAMATE--HOMOCYSTEINE METHYLTRANSFERASE"/>
    <property type="match status" value="1"/>
</dbReference>
<dbReference type="Pfam" id="PF08267">
    <property type="entry name" value="Meth_synt_1"/>
    <property type="match status" value="1"/>
</dbReference>
<dbReference type="Pfam" id="PF01717">
    <property type="entry name" value="Meth_synt_2"/>
    <property type="match status" value="1"/>
</dbReference>
<dbReference type="PIRSF" id="PIRSF000382">
    <property type="entry name" value="MeTrfase_B12_ind"/>
    <property type="match status" value="1"/>
</dbReference>
<dbReference type="SUPFAM" id="SSF51726">
    <property type="entry name" value="UROD/MetE-like"/>
    <property type="match status" value="2"/>
</dbReference>
<sequence>MTTTTHILGYPRIGEKRELKFAQEKYWRGEIDQAELKKVGAELRHKNWQTQASAGLSFAVAGDFAWYDHVLTTTLLLGHVPKRHRHGFPDLDTLFRVGRGQSQSSCACHGAAASDMTKWFNTNYHYIVPEFSKEDTFEVSWPQLFEEVNEAVQAGHNVKPVLLGPLSYLYLGKEIEDGFDRLTLLPRLLTAYQAILAKLAKQGVEWVQIDEPILALELEKPWLDAFKLAYQVIRSDVKVLLTTYFDSVVDSLDRIVELSVDGLHVDLSAAPEQLDAVLAKLPQNWVLSLGVVNGRNVWRSDVKAQLERLQPVKAALGERLWVASSCSLLHSPVDLELEAGLSAEVRSWFAFAKQKVSEVVLLGKALDGDAAAIAQCEAYSQPIQARKSAAHVHKATVQSRVNAITAELAQRSVPYAERARHQAEVLQLPLLPTTTIGSFPQTSEIRVQRSAYRSGQLSSAEYEQALKGHIADAVKRQEALDLDVLVHGEAERNDMVEYFAENLAGFQTTQFGWVQSYGSRCVKPAIVVADIEREQPITVGWSTYAQSLTSKQMKGMLTGPVTILCWTFPREDISRKAIAQQLALALRDEVSDLQDAGINIIQIDEPAIREGLPLKKRDHQNYLDWAVEAFRISAASARPETQIHTHMCYSEFNEIIESVAALDADVITIETSRSNMELLKAFEEFNYPNEIGPGVYDIHSPNIPSEEWIVDLVKKAAQKIPVERLWVNPDCGLKTRNWPETEAALANLVSAAKRLRKEFAKETTAVNSEAVADVETEA</sequence>
<accession>Q8CWK1</accession>